<gene>
    <name evidence="1" type="primary">lpxD</name>
    <name type="ordered locus">XOO1967</name>
</gene>
<reference key="1">
    <citation type="journal article" date="2005" name="Nucleic Acids Res.">
        <title>The genome sequence of Xanthomonas oryzae pathovar oryzae KACC10331, the bacterial blight pathogen of rice.</title>
        <authorList>
            <person name="Lee B.-M."/>
            <person name="Park Y.-J."/>
            <person name="Park D.-S."/>
            <person name="Kang H.-W."/>
            <person name="Kim J.-G."/>
            <person name="Song E.-S."/>
            <person name="Park I.-C."/>
            <person name="Yoon U.-H."/>
            <person name="Hahn J.-H."/>
            <person name="Koo B.-S."/>
            <person name="Lee G.-B."/>
            <person name="Kim H."/>
            <person name="Park H.-S."/>
            <person name="Yoon K.-O."/>
            <person name="Kim J.-H."/>
            <person name="Jung C.-H."/>
            <person name="Koh N.-H."/>
            <person name="Seo J.-S."/>
            <person name="Go S.-J."/>
        </authorList>
    </citation>
    <scope>NUCLEOTIDE SEQUENCE [LARGE SCALE GENOMIC DNA]</scope>
    <source>
        <strain>KACC10331 / KXO85</strain>
    </source>
</reference>
<proteinExistence type="inferred from homology"/>
<accession>Q5H1F0</accession>
<feature type="chain" id="PRO_0000264459" description="UDP-3-O-acylglucosamine N-acyltransferase">
    <location>
        <begin position="1"/>
        <end position="337"/>
    </location>
</feature>
<feature type="active site" description="Proton acceptor" evidence="1">
    <location>
        <position position="238"/>
    </location>
</feature>
<protein>
    <recommendedName>
        <fullName evidence="1">UDP-3-O-acylglucosamine N-acyltransferase</fullName>
        <ecNumber evidence="1">2.3.1.191</ecNumber>
    </recommendedName>
</protein>
<evidence type="ECO:0000255" key="1">
    <source>
        <dbReference type="HAMAP-Rule" id="MF_00523"/>
    </source>
</evidence>
<name>LPXD_XANOR</name>
<organism>
    <name type="scientific">Xanthomonas oryzae pv. oryzae (strain KACC10331 / KXO85)</name>
    <dbReference type="NCBI Taxonomy" id="291331"/>
    <lineage>
        <taxon>Bacteria</taxon>
        <taxon>Pseudomonadati</taxon>
        <taxon>Pseudomonadota</taxon>
        <taxon>Gammaproteobacteria</taxon>
        <taxon>Lysobacterales</taxon>
        <taxon>Lysobacteraceae</taxon>
        <taxon>Xanthomonas</taxon>
    </lineage>
</organism>
<dbReference type="EC" id="2.3.1.191" evidence="1"/>
<dbReference type="EMBL" id="AE013598">
    <property type="protein sequence ID" value="AAW75221.1"/>
    <property type="molecule type" value="Genomic_DNA"/>
</dbReference>
<dbReference type="SMR" id="Q5H1F0"/>
<dbReference type="STRING" id="291331.XOO1967"/>
<dbReference type="KEGG" id="xoo:XOO1967"/>
<dbReference type="HOGENOM" id="CLU_049865_0_1_6"/>
<dbReference type="UniPathway" id="UPA00973"/>
<dbReference type="Proteomes" id="UP000006735">
    <property type="component" value="Chromosome"/>
</dbReference>
<dbReference type="GO" id="GO:0016020">
    <property type="term" value="C:membrane"/>
    <property type="evidence" value="ECO:0007669"/>
    <property type="project" value="GOC"/>
</dbReference>
<dbReference type="GO" id="GO:0016410">
    <property type="term" value="F:N-acyltransferase activity"/>
    <property type="evidence" value="ECO:0007669"/>
    <property type="project" value="InterPro"/>
</dbReference>
<dbReference type="GO" id="GO:0009245">
    <property type="term" value="P:lipid A biosynthetic process"/>
    <property type="evidence" value="ECO:0007669"/>
    <property type="project" value="UniProtKB-UniRule"/>
</dbReference>
<dbReference type="CDD" id="cd03352">
    <property type="entry name" value="LbH_LpxD"/>
    <property type="match status" value="1"/>
</dbReference>
<dbReference type="Gene3D" id="1.20.5.170">
    <property type="match status" value="1"/>
</dbReference>
<dbReference type="Gene3D" id="2.160.10.10">
    <property type="entry name" value="Hexapeptide repeat proteins"/>
    <property type="match status" value="1"/>
</dbReference>
<dbReference type="Gene3D" id="3.40.1390.10">
    <property type="entry name" value="MurE/MurF, N-terminal domain"/>
    <property type="match status" value="1"/>
</dbReference>
<dbReference type="HAMAP" id="MF_00523">
    <property type="entry name" value="LpxD"/>
    <property type="match status" value="1"/>
</dbReference>
<dbReference type="InterPro" id="IPR001451">
    <property type="entry name" value="Hexapep"/>
</dbReference>
<dbReference type="InterPro" id="IPR007691">
    <property type="entry name" value="LpxD"/>
</dbReference>
<dbReference type="InterPro" id="IPR011004">
    <property type="entry name" value="Trimer_LpxA-like_sf"/>
</dbReference>
<dbReference type="InterPro" id="IPR020573">
    <property type="entry name" value="UDP_GlcNAc_AcTrfase_non-rep"/>
</dbReference>
<dbReference type="NCBIfam" id="TIGR01853">
    <property type="entry name" value="lipid_A_lpxD"/>
    <property type="match status" value="1"/>
</dbReference>
<dbReference type="NCBIfam" id="NF002060">
    <property type="entry name" value="PRK00892.1"/>
    <property type="match status" value="1"/>
</dbReference>
<dbReference type="PANTHER" id="PTHR43378">
    <property type="entry name" value="UDP-3-O-ACYLGLUCOSAMINE N-ACYLTRANSFERASE"/>
    <property type="match status" value="1"/>
</dbReference>
<dbReference type="PANTHER" id="PTHR43378:SF2">
    <property type="entry name" value="UDP-3-O-ACYLGLUCOSAMINE N-ACYLTRANSFERASE 1, MITOCHONDRIAL-RELATED"/>
    <property type="match status" value="1"/>
</dbReference>
<dbReference type="Pfam" id="PF00132">
    <property type="entry name" value="Hexapep"/>
    <property type="match status" value="1"/>
</dbReference>
<dbReference type="Pfam" id="PF04613">
    <property type="entry name" value="LpxD"/>
    <property type="match status" value="1"/>
</dbReference>
<dbReference type="SUPFAM" id="SSF51161">
    <property type="entry name" value="Trimeric LpxA-like enzymes"/>
    <property type="match status" value="1"/>
</dbReference>
<comment type="function">
    <text evidence="1">Catalyzes the N-acylation of UDP-3-O-acylglucosamine using 3-hydroxyacyl-ACP as the acyl donor. Is involved in the biosynthesis of lipid A, a phosphorylated glycolipid that anchors the lipopolysaccharide to the outer membrane of the cell.</text>
</comment>
<comment type="catalytic activity">
    <reaction evidence="1">
        <text>a UDP-3-O-[(3R)-3-hydroxyacyl]-alpha-D-glucosamine + a (3R)-hydroxyacyl-[ACP] = a UDP-2-N,3-O-bis[(3R)-3-hydroxyacyl]-alpha-D-glucosamine + holo-[ACP] + H(+)</text>
        <dbReference type="Rhea" id="RHEA:53836"/>
        <dbReference type="Rhea" id="RHEA-COMP:9685"/>
        <dbReference type="Rhea" id="RHEA-COMP:9945"/>
        <dbReference type="ChEBI" id="CHEBI:15378"/>
        <dbReference type="ChEBI" id="CHEBI:64479"/>
        <dbReference type="ChEBI" id="CHEBI:78827"/>
        <dbReference type="ChEBI" id="CHEBI:137740"/>
        <dbReference type="ChEBI" id="CHEBI:137748"/>
        <dbReference type="EC" id="2.3.1.191"/>
    </reaction>
</comment>
<comment type="pathway">
    <text evidence="1">Bacterial outer membrane biogenesis; LPS lipid A biosynthesis.</text>
</comment>
<comment type="subunit">
    <text evidence="1">Homotrimer.</text>
</comment>
<comment type="similarity">
    <text evidence="1">Belongs to the transferase hexapeptide repeat family. LpxD subfamily.</text>
</comment>
<keyword id="KW-0012">Acyltransferase</keyword>
<keyword id="KW-0441">Lipid A biosynthesis</keyword>
<keyword id="KW-0444">Lipid biosynthesis</keyword>
<keyword id="KW-0443">Lipid metabolism</keyword>
<keyword id="KW-1185">Reference proteome</keyword>
<keyword id="KW-0677">Repeat</keyword>
<keyword id="KW-0808">Transferase</keyword>
<sequence>MRLTASAIAGQFGLTVLGDGSTEVSGVATLAHAGAGQLSFLSNPRYRPQLADSQAAVVVLRADDAEAAKGTALVAKDPYTAFAKIAALFDVAPVCEPGIHPSAVIDPTAQVSPGAHVGPFVSIGARSRVGDGCVIGTGSLIGADCVVDDGSELLARVTLVTRVRLGKRVRIHPGAVIGADGFGLAMDAGHWIKVPQLGGVVIGDDCEIGANTCIDRGALEDTVLEEDVRVDNLVQIAHNCRIGAHSAIAGCSGIAGSAKIGRYCLLGGHVGVVGHLEICDKVVITGKSVVRNSIHEPGEYSSGTPLTDNRTWRKNAARFKQLDVLARRILAVGKEKE</sequence>